<keyword id="KW-0963">Cytoplasm</keyword>
<keyword id="KW-0521">NADP</keyword>
<keyword id="KW-0560">Oxidoreductase</keyword>
<keyword id="KW-0671">Queuosine biosynthesis</keyword>
<organism>
    <name type="scientific">Sodalis glossinidius (strain morsitans)</name>
    <dbReference type="NCBI Taxonomy" id="343509"/>
    <lineage>
        <taxon>Bacteria</taxon>
        <taxon>Pseudomonadati</taxon>
        <taxon>Pseudomonadota</taxon>
        <taxon>Gammaproteobacteria</taxon>
        <taxon>Enterobacterales</taxon>
        <taxon>Bruguierivoracaceae</taxon>
        <taxon>Sodalis</taxon>
    </lineage>
</organism>
<gene>
    <name evidence="1" type="primary">queF</name>
    <name type="ordered locus">SG1950</name>
</gene>
<comment type="function">
    <text evidence="1">Catalyzes the NADPH-dependent reduction of 7-cyano-7-deazaguanine (preQ0) to 7-aminomethyl-7-deazaguanine (preQ1).</text>
</comment>
<comment type="catalytic activity">
    <reaction evidence="1">
        <text>7-aminomethyl-7-carbaguanine + 2 NADP(+) = 7-cyano-7-deazaguanine + 2 NADPH + 3 H(+)</text>
        <dbReference type="Rhea" id="RHEA:13409"/>
        <dbReference type="ChEBI" id="CHEBI:15378"/>
        <dbReference type="ChEBI" id="CHEBI:45075"/>
        <dbReference type="ChEBI" id="CHEBI:57783"/>
        <dbReference type="ChEBI" id="CHEBI:58349"/>
        <dbReference type="ChEBI" id="CHEBI:58703"/>
        <dbReference type="EC" id="1.7.1.13"/>
    </reaction>
</comment>
<comment type="pathway">
    <text evidence="1">tRNA modification; tRNA-queuosine biosynthesis.</text>
</comment>
<comment type="subunit">
    <text evidence="1">Homodimer.</text>
</comment>
<comment type="subcellular location">
    <subcellularLocation>
        <location evidence="1">Cytoplasm</location>
    </subcellularLocation>
</comment>
<comment type="similarity">
    <text evidence="1">Belongs to the GTP cyclohydrolase I family. QueF type 2 subfamily.</text>
</comment>
<accession>Q2NRK0</accession>
<feature type="chain" id="PRO_0000247722" description="NADPH-dependent 7-cyano-7-deazaguanine reductase">
    <location>
        <begin position="1"/>
        <end position="281"/>
    </location>
</feature>
<feature type="active site" description="Thioimide intermediate" evidence="1">
    <location>
        <position position="189"/>
    </location>
</feature>
<feature type="active site" description="Proton donor" evidence="1">
    <location>
        <position position="196"/>
    </location>
</feature>
<feature type="binding site" evidence="1">
    <location>
        <begin position="88"/>
        <end position="90"/>
    </location>
    <ligand>
        <name>substrate</name>
    </ligand>
</feature>
<feature type="binding site" evidence="1">
    <location>
        <begin position="90"/>
        <end position="91"/>
    </location>
    <ligand>
        <name>NADPH</name>
        <dbReference type="ChEBI" id="CHEBI:57783"/>
    </ligand>
</feature>
<feature type="binding site" evidence="1">
    <location>
        <begin position="228"/>
        <end position="229"/>
    </location>
    <ligand>
        <name>substrate</name>
    </ligand>
</feature>
<feature type="binding site" evidence="1">
    <location>
        <begin position="257"/>
        <end position="258"/>
    </location>
    <ligand>
        <name>NADPH</name>
        <dbReference type="ChEBI" id="CHEBI:57783"/>
    </ligand>
</feature>
<evidence type="ECO:0000255" key="1">
    <source>
        <dbReference type="HAMAP-Rule" id="MF_00817"/>
    </source>
</evidence>
<proteinExistence type="inferred from homology"/>
<protein>
    <recommendedName>
        <fullName evidence="1">NADPH-dependent 7-cyano-7-deazaguanine reductase</fullName>
        <ecNumber evidence="1">1.7.1.13</ecNumber>
    </recommendedName>
    <alternativeName>
        <fullName evidence="1">7-cyano-7-carbaguanine reductase</fullName>
    </alternativeName>
    <alternativeName>
        <fullName evidence="1">NADPH-dependent nitrile oxidoreductase</fullName>
    </alternativeName>
    <alternativeName>
        <fullName evidence="1">PreQ(0) reductase</fullName>
    </alternativeName>
</protein>
<dbReference type="EC" id="1.7.1.13" evidence="1"/>
<dbReference type="EMBL" id="AP008232">
    <property type="protein sequence ID" value="BAE75225.1"/>
    <property type="molecule type" value="Genomic_DNA"/>
</dbReference>
<dbReference type="RefSeq" id="WP_011411681.1">
    <property type="nucleotide sequence ID" value="NC_007712.1"/>
</dbReference>
<dbReference type="SMR" id="Q2NRK0"/>
<dbReference type="STRING" id="343509.SG1950"/>
<dbReference type="KEGG" id="sgl:SG1950"/>
<dbReference type="eggNOG" id="COG0780">
    <property type="taxonomic scope" value="Bacteria"/>
</dbReference>
<dbReference type="eggNOG" id="COG2904">
    <property type="taxonomic scope" value="Bacteria"/>
</dbReference>
<dbReference type="HOGENOM" id="CLU_054738_0_0_6"/>
<dbReference type="OrthoDB" id="9789995at2"/>
<dbReference type="BioCyc" id="SGLO343509:SGP1_RS17885-MONOMER"/>
<dbReference type="UniPathway" id="UPA00392"/>
<dbReference type="Proteomes" id="UP000001932">
    <property type="component" value="Chromosome"/>
</dbReference>
<dbReference type="GO" id="GO:0005737">
    <property type="term" value="C:cytoplasm"/>
    <property type="evidence" value="ECO:0007669"/>
    <property type="project" value="UniProtKB-SubCell"/>
</dbReference>
<dbReference type="GO" id="GO:0033739">
    <property type="term" value="F:preQ1 synthase activity"/>
    <property type="evidence" value="ECO:0007669"/>
    <property type="project" value="UniProtKB-UniRule"/>
</dbReference>
<dbReference type="GO" id="GO:0008616">
    <property type="term" value="P:queuosine biosynthetic process"/>
    <property type="evidence" value="ECO:0007669"/>
    <property type="project" value="UniProtKB-UniRule"/>
</dbReference>
<dbReference type="GO" id="GO:0006400">
    <property type="term" value="P:tRNA modification"/>
    <property type="evidence" value="ECO:0007669"/>
    <property type="project" value="UniProtKB-UniRule"/>
</dbReference>
<dbReference type="Gene3D" id="3.30.1130.10">
    <property type="match status" value="2"/>
</dbReference>
<dbReference type="HAMAP" id="MF_00817">
    <property type="entry name" value="QueF_type2"/>
    <property type="match status" value="1"/>
</dbReference>
<dbReference type="InterPro" id="IPR043133">
    <property type="entry name" value="GTP-CH-I_C/QueF"/>
</dbReference>
<dbReference type="InterPro" id="IPR050084">
    <property type="entry name" value="NADPH_dep_7-cyano-7-deazaG_red"/>
</dbReference>
<dbReference type="InterPro" id="IPR029500">
    <property type="entry name" value="QueF"/>
</dbReference>
<dbReference type="InterPro" id="IPR029139">
    <property type="entry name" value="QueF_N"/>
</dbReference>
<dbReference type="InterPro" id="IPR016428">
    <property type="entry name" value="QueF_type2"/>
</dbReference>
<dbReference type="NCBIfam" id="TIGR03138">
    <property type="entry name" value="QueF"/>
    <property type="match status" value="1"/>
</dbReference>
<dbReference type="PANTHER" id="PTHR34354">
    <property type="entry name" value="NADPH-DEPENDENT 7-CYANO-7-DEAZAGUANINE REDUCTASE"/>
    <property type="match status" value="1"/>
</dbReference>
<dbReference type="PANTHER" id="PTHR34354:SF1">
    <property type="entry name" value="NADPH-DEPENDENT 7-CYANO-7-DEAZAGUANINE REDUCTASE"/>
    <property type="match status" value="1"/>
</dbReference>
<dbReference type="Pfam" id="PF14489">
    <property type="entry name" value="QueF"/>
    <property type="match status" value="1"/>
</dbReference>
<dbReference type="Pfam" id="PF14819">
    <property type="entry name" value="QueF_N"/>
    <property type="match status" value="1"/>
</dbReference>
<dbReference type="PIRSF" id="PIRSF004750">
    <property type="entry name" value="Nitrile_oxidored_YqcD_prd"/>
    <property type="match status" value="1"/>
</dbReference>
<dbReference type="SUPFAM" id="SSF55620">
    <property type="entry name" value="Tetrahydrobiopterin biosynthesis enzymes-like"/>
    <property type="match status" value="1"/>
</dbReference>
<sequence length="281" mass="31903">MTNYDQHHALQSLTLGKPTPYRERYDPSLLQAVPRALNRDLLGLQATALPFHGADIWTLYELSWLNDAGIPQVAIGEIALNATSTNLIESKSFKLYLNSLNQTSFPSREAVRVRLAEDLSRCADGEVQVVLRALSDFTSSPLLDFDGECIDDQPIHIDDYTFTNRYLEGAAGGSVVSETLVSHLLKSNCLITHQPDWGSVQIRYRGARIDREALLRYLVSFRQHNEFHEQCVERIFCDVMQFCRPETLTVYARYTRRGGLDINPWRSNTHFSPATGRLARQ</sequence>
<name>QUEF_SODGM</name>
<reference key="1">
    <citation type="journal article" date="2006" name="Genome Res.">
        <title>Massive genome erosion and functional adaptations provide insights into the symbiotic lifestyle of Sodalis glossinidius in the tsetse host.</title>
        <authorList>
            <person name="Toh H."/>
            <person name="Weiss B.L."/>
            <person name="Perkin S.A.H."/>
            <person name="Yamashita A."/>
            <person name="Oshima K."/>
            <person name="Hattori M."/>
            <person name="Aksoy S."/>
        </authorList>
    </citation>
    <scope>NUCLEOTIDE SEQUENCE [LARGE SCALE GENOMIC DNA]</scope>
    <source>
        <strain>morsitans</strain>
    </source>
</reference>